<reference key="1">
    <citation type="journal article" date="2005" name="Science">
        <title>The transcriptional landscape of the mammalian genome.</title>
        <authorList>
            <person name="Carninci P."/>
            <person name="Kasukawa T."/>
            <person name="Katayama S."/>
            <person name="Gough J."/>
            <person name="Frith M.C."/>
            <person name="Maeda N."/>
            <person name="Oyama R."/>
            <person name="Ravasi T."/>
            <person name="Lenhard B."/>
            <person name="Wells C."/>
            <person name="Kodzius R."/>
            <person name="Shimokawa K."/>
            <person name="Bajic V.B."/>
            <person name="Brenner S.E."/>
            <person name="Batalov S."/>
            <person name="Forrest A.R."/>
            <person name="Zavolan M."/>
            <person name="Davis M.J."/>
            <person name="Wilming L.G."/>
            <person name="Aidinis V."/>
            <person name="Allen J.E."/>
            <person name="Ambesi-Impiombato A."/>
            <person name="Apweiler R."/>
            <person name="Aturaliya R.N."/>
            <person name="Bailey T.L."/>
            <person name="Bansal M."/>
            <person name="Baxter L."/>
            <person name="Beisel K.W."/>
            <person name="Bersano T."/>
            <person name="Bono H."/>
            <person name="Chalk A.M."/>
            <person name="Chiu K.P."/>
            <person name="Choudhary V."/>
            <person name="Christoffels A."/>
            <person name="Clutterbuck D.R."/>
            <person name="Crowe M.L."/>
            <person name="Dalla E."/>
            <person name="Dalrymple B.P."/>
            <person name="de Bono B."/>
            <person name="Della Gatta G."/>
            <person name="di Bernardo D."/>
            <person name="Down T."/>
            <person name="Engstrom P."/>
            <person name="Fagiolini M."/>
            <person name="Faulkner G."/>
            <person name="Fletcher C.F."/>
            <person name="Fukushima T."/>
            <person name="Furuno M."/>
            <person name="Futaki S."/>
            <person name="Gariboldi M."/>
            <person name="Georgii-Hemming P."/>
            <person name="Gingeras T.R."/>
            <person name="Gojobori T."/>
            <person name="Green R.E."/>
            <person name="Gustincich S."/>
            <person name="Harbers M."/>
            <person name="Hayashi Y."/>
            <person name="Hensch T.K."/>
            <person name="Hirokawa N."/>
            <person name="Hill D."/>
            <person name="Huminiecki L."/>
            <person name="Iacono M."/>
            <person name="Ikeo K."/>
            <person name="Iwama A."/>
            <person name="Ishikawa T."/>
            <person name="Jakt M."/>
            <person name="Kanapin A."/>
            <person name="Katoh M."/>
            <person name="Kawasawa Y."/>
            <person name="Kelso J."/>
            <person name="Kitamura H."/>
            <person name="Kitano H."/>
            <person name="Kollias G."/>
            <person name="Krishnan S.P."/>
            <person name="Kruger A."/>
            <person name="Kummerfeld S.K."/>
            <person name="Kurochkin I.V."/>
            <person name="Lareau L.F."/>
            <person name="Lazarevic D."/>
            <person name="Lipovich L."/>
            <person name="Liu J."/>
            <person name="Liuni S."/>
            <person name="McWilliam S."/>
            <person name="Madan Babu M."/>
            <person name="Madera M."/>
            <person name="Marchionni L."/>
            <person name="Matsuda H."/>
            <person name="Matsuzawa S."/>
            <person name="Miki H."/>
            <person name="Mignone F."/>
            <person name="Miyake S."/>
            <person name="Morris K."/>
            <person name="Mottagui-Tabar S."/>
            <person name="Mulder N."/>
            <person name="Nakano N."/>
            <person name="Nakauchi H."/>
            <person name="Ng P."/>
            <person name="Nilsson R."/>
            <person name="Nishiguchi S."/>
            <person name="Nishikawa S."/>
            <person name="Nori F."/>
            <person name="Ohara O."/>
            <person name="Okazaki Y."/>
            <person name="Orlando V."/>
            <person name="Pang K.C."/>
            <person name="Pavan W.J."/>
            <person name="Pavesi G."/>
            <person name="Pesole G."/>
            <person name="Petrovsky N."/>
            <person name="Piazza S."/>
            <person name="Reed J."/>
            <person name="Reid J.F."/>
            <person name="Ring B.Z."/>
            <person name="Ringwald M."/>
            <person name="Rost B."/>
            <person name="Ruan Y."/>
            <person name="Salzberg S.L."/>
            <person name="Sandelin A."/>
            <person name="Schneider C."/>
            <person name="Schoenbach C."/>
            <person name="Sekiguchi K."/>
            <person name="Semple C.A."/>
            <person name="Seno S."/>
            <person name="Sessa L."/>
            <person name="Sheng Y."/>
            <person name="Shibata Y."/>
            <person name="Shimada H."/>
            <person name="Shimada K."/>
            <person name="Silva D."/>
            <person name="Sinclair B."/>
            <person name="Sperling S."/>
            <person name="Stupka E."/>
            <person name="Sugiura K."/>
            <person name="Sultana R."/>
            <person name="Takenaka Y."/>
            <person name="Taki K."/>
            <person name="Tammoja K."/>
            <person name="Tan S.L."/>
            <person name="Tang S."/>
            <person name="Taylor M.S."/>
            <person name="Tegner J."/>
            <person name="Teichmann S.A."/>
            <person name="Ueda H.R."/>
            <person name="van Nimwegen E."/>
            <person name="Verardo R."/>
            <person name="Wei C.L."/>
            <person name="Yagi K."/>
            <person name="Yamanishi H."/>
            <person name="Zabarovsky E."/>
            <person name="Zhu S."/>
            <person name="Zimmer A."/>
            <person name="Hide W."/>
            <person name="Bult C."/>
            <person name="Grimmond S.M."/>
            <person name="Teasdale R.D."/>
            <person name="Liu E.T."/>
            <person name="Brusic V."/>
            <person name="Quackenbush J."/>
            <person name="Wahlestedt C."/>
            <person name="Mattick J.S."/>
            <person name="Hume D.A."/>
            <person name="Kai C."/>
            <person name="Sasaki D."/>
            <person name="Tomaru Y."/>
            <person name="Fukuda S."/>
            <person name="Kanamori-Katayama M."/>
            <person name="Suzuki M."/>
            <person name="Aoki J."/>
            <person name="Arakawa T."/>
            <person name="Iida J."/>
            <person name="Imamura K."/>
            <person name="Itoh M."/>
            <person name="Kato T."/>
            <person name="Kawaji H."/>
            <person name="Kawagashira N."/>
            <person name="Kawashima T."/>
            <person name="Kojima M."/>
            <person name="Kondo S."/>
            <person name="Konno H."/>
            <person name="Nakano K."/>
            <person name="Ninomiya N."/>
            <person name="Nishio T."/>
            <person name="Okada M."/>
            <person name="Plessy C."/>
            <person name="Shibata K."/>
            <person name="Shiraki T."/>
            <person name="Suzuki S."/>
            <person name="Tagami M."/>
            <person name="Waki K."/>
            <person name="Watahiki A."/>
            <person name="Okamura-Oho Y."/>
            <person name="Suzuki H."/>
            <person name="Kawai J."/>
            <person name="Hayashizaki Y."/>
        </authorList>
    </citation>
    <scope>NUCLEOTIDE SEQUENCE [LARGE SCALE MRNA]</scope>
    <source>
        <strain>C57BL/6J</strain>
        <tissue>Brain</tissue>
        <tissue>Skin</tissue>
        <tissue>Stomach</tissue>
    </source>
</reference>
<reference key="2">
    <citation type="journal article" date="2004" name="Genome Res.">
        <title>The status, quality, and expansion of the NIH full-length cDNA project: the Mammalian Gene Collection (MGC).</title>
        <authorList>
            <consortium name="The MGC Project Team"/>
        </authorList>
    </citation>
    <scope>NUCLEOTIDE SEQUENCE [LARGE SCALE MRNA]</scope>
    <source>
        <strain>FVB/N</strain>
        <tissue>Liver</tissue>
    </source>
</reference>
<reference key="3">
    <citation type="journal article" date="2015" name="Vet. Pathol.">
        <title>Nephronophthisis and retinal degeneration in tmem218-/- mice: a novel mouse model for Senior-Loeken syndrome?</title>
        <authorList>
            <person name="Vogel P."/>
            <person name="Gelfman C.M."/>
            <person name="Issa T."/>
            <person name="Payne B.J."/>
            <person name="Hansen G.M."/>
            <person name="Read R.W."/>
            <person name="Jones C."/>
            <person name="Pitcher M.R."/>
            <person name="Ding Z.M."/>
            <person name="DaCosta C.M."/>
            <person name="Shadoan M.K."/>
            <person name="Vance R.B."/>
            <person name="Powell D.R."/>
        </authorList>
    </citation>
    <scope>DISRUPTION PHENOTYPE</scope>
    <scope>POSSIBLE FUNCTION</scope>
</reference>
<reference key="4">
    <citation type="journal article" date="2016" name="PLoS Biol.">
        <title>MKS5 and CEP290 dependent assembly pathway of the ciliary transition zone.</title>
        <authorList>
            <person name="Li C."/>
            <person name="Jensen V.L."/>
            <person name="Park K."/>
            <person name="Kennedy J."/>
            <person name="Garcia-Gonzalo F.R."/>
            <person name="Romani M."/>
            <person name="De Mori R."/>
            <person name="Bruel A.L."/>
            <person name="Gaillard D."/>
            <person name="Doray B."/>
            <person name="Lopez E."/>
            <person name="Riviere J.B."/>
            <person name="Faivre L."/>
            <person name="Thauvin-Robinet C."/>
            <person name="Reiter J.F."/>
            <person name="Blacque O.E."/>
            <person name="Valente E.M."/>
            <person name="Leroux M.R."/>
        </authorList>
    </citation>
    <scope>SUBCELLULAR LOCATION</scope>
</reference>
<gene>
    <name type="primary">Tmem218</name>
</gene>
<feature type="chain" id="PRO_0000321837" description="Transmembrane protein 218">
    <location>
        <begin position="1"/>
        <end position="115"/>
    </location>
</feature>
<feature type="transmembrane region" description="Helical" evidence="2">
    <location>
        <begin position="5"/>
        <end position="25"/>
    </location>
</feature>
<feature type="transmembrane region" description="Helical" evidence="2">
    <location>
        <begin position="38"/>
        <end position="58"/>
    </location>
</feature>
<feature type="transmembrane region" description="Helical" evidence="2">
    <location>
        <begin position="81"/>
        <end position="101"/>
    </location>
</feature>
<feature type="sequence conflict" description="In Ref. 2; BAC25179." evidence="5" ref="2">
    <original>M</original>
    <variation>I</variation>
    <location>
        <position position="4"/>
    </location>
</feature>
<feature type="sequence conflict" description="In Ref. 2; BAC25179." evidence="5" ref="2">
    <original>L</original>
    <variation>I</variation>
    <location>
        <position position="6"/>
    </location>
</feature>
<sequence>MAGMVLGVGAGVFLLALIWVLVLLLCVLLSRASGIARFSIVFVFLGALIITTVLLLFPRASEFPAPEGEMKIVDAFFIGRYVLLAFLSAVFLGGLFLLLTHHLLEPIYAKPLRSC</sequence>
<proteinExistence type="inferred from homology"/>
<keyword id="KW-0966">Cell projection</keyword>
<keyword id="KW-0472">Membrane</keyword>
<keyword id="KW-1185">Reference proteome</keyword>
<keyword id="KW-0812">Transmembrane</keyword>
<keyword id="KW-1133">Transmembrane helix</keyword>
<dbReference type="EMBL" id="AK003010">
    <property type="protein sequence ID" value="BAB22510.1"/>
    <property type="molecule type" value="mRNA"/>
</dbReference>
<dbReference type="EMBL" id="AK007575">
    <property type="protein sequence ID" value="BAC25179.1"/>
    <property type="molecule type" value="mRNA"/>
</dbReference>
<dbReference type="EMBL" id="AK008902">
    <property type="protein sequence ID" value="BAB25961.1"/>
    <property type="molecule type" value="mRNA"/>
</dbReference>
<dbReference type="EMBL" id="AK161115">
    <property type="protein sequence ID" value="BAE36199.1"/>
    <property type="molecule type" value="mRNA"/>
</dbReference>
<dbReference type="EMBL" id="BC034160">
    <property type="protein sequence ID" value="AAH34160.1"/>
    <property type="molecule type" value="mRNA"/>
</dbReference>
<dbReference type="CCDS" id="CCDS22975.1"/>
<dbReference type="RefSeq" id="NP_001297025.1">
    <property type="nucleotide sequence ID" value="NM_001310096.1"/>
</dbReference>
<dbReference type="RefSeq" id="NP_079740.1">
    <property type="nucleotide sequence ID" value="NM_025464.3"/>
</dbReference>
<dbReference type="RefSeq" id="XP_006510609.1">
    <property type="nucleotide sequence ID" value="XM_006510546.4"/>
</dbReference>
<dbReference type="SMR" id="Q9CQ44"/>
<dbReference type="BioGRID" id="211352">
    <property type="interactions" value="1"/>
</dbReference>
<dbReference type="FunCoup" id="Q9CQ44">
    <property type="interactions" value="132"/>
</dbReference>
<dbReference type="IntAct" id="Q9CQ44">
    <property type="interactions" value="1"/>
</dbReference>
<dbReference type="STRING" id="10090.ENSMUSP00000034632"/>
<dbReference type="PaxDb" id="10090-ENSMUSP00000034632"/>
<dbReference type="Antibodypedia" id="50074">
    <property type="antibodies" value="9 antibodies from 8 providers"/>
</dbReference>
<dbReference type="DNASU" id="66279"/>
<dbReference type="Ensembl" id="ENSMUST00000034632.10">
    <property type="protein sequence ID" value="ENSMUSP00000034632.9"/>
    <property type="gene ID" value="ENSMUSG00000032121.10"/>
</dbReference>
<dbReference type="GeneID" id="66279"/>
<dbReference type="KEGG" id="mmu:66279"/>
<dbReference type="UCSC" id="uc009ouj.1">
    <property type="organism name" value="mouse"/>
</dbReference>
<dbReference type="AGR" id="MGI:1913529"/>
<dbReference type="CTD" id="219854"/>
<dbReference type="MGI" id="MGI:1913529">
    <property type="gene designation" value="Tmem218"/>
</dbReference>
<dbReference type="VEuPathDB" id="HostDB:ENSMUSG00000032121"/>
<dbReference type="eggNOG" id="ENOG502S2I1">
    <property type="taxonomic scope" value="Eukaryota"/>
</dbReference>
<dbReference type="GeneTree" id="ENSGT00390000016247"/>
<dbReference type="HOGENOM" id="CLU_169774_0_0_1"/>
<dbReference type="InParanoid" id="Q9CQ44"/>
<dbReference type="OMA" id="PATEMKI"/>
<dbReference type="OrthoDB" id="5978182at2759"/>
<dbReference type="PhylomeDB" id="Q9CQ44"/>
<dbReference type="TreeFam" id="TF328597"/>
<dbReference type="BioGRID-ORCS" id="66279">
    <property type="hits" value="1 hit in 79 CRISPR screens"/>
</dbReference>
<dbReference type="ChiTaRS" id="Tmem218">
    <property type="organism name" value="mouse"/>
</dbReference>
<dbReference type="PRO" id="PR:Q9CQ44"/>
<dbReference type="Proteomes" id="UP000000589">
    <property type="component" value="Chromosome 9"/>
</dbReference>
<dbReference type="RNAct" id="Q9CQ44">
    <property type="molecule type" value="protein"/>
</dbReference>
<dbReference type="Bgee" id="ENSMUSG00000032121">
    <property type="expression patterns" value="Expressed in interventricular septum and 244 other cell types or tissues"/>
</dbReference>
<dbReference type="GO" id="GO:0005929">
    <property type="term" value="C:cilium"/>
    <property type="evidence" value="ECO:0007669"/>
    <property type="project" value="UniProtKB-SubCell"/>
</dbReference>
<dbReference type="GO" id="GO:0016020">
    <property type="term" value="C:membrane"/>
    <property type="evidence" value="ECO:0007669"/>
    <property type="project" value="UniProtKB-SubCell"/>
</dbReference>
<dbReference type="InterPro" id="IPR026771">
    <property type="entry name" value="Tmem218"/>
</dbReference>
<dbReference type="PANTHER" id="PTHR31622">
    <property type="entry name" value="TRANSMEMBRANE PROTEIN 218"/>
    <property type="match status" value="1"/>
</dbReference>
<dbReference type="PANTHER" id="PTHR31622:SF1">
    <property type="entry name" value="TRANSMEMBRANE PROTEIN 218"/>
    <property type="match status" value="1"/>
</dbReference>
<organism>
    <name type="scientific">Mus musculus</name>
    <name type="common">Mouse</name>
    <dbReference type="NCBI Taxonomy" id="10090"/>
    <lineage>
        <taxon>Eukaryota</taxon>
        <taxon>Metazoa</taxon>
        <taxon>Chordata</taxon>
        <taxon>Craniata</taxon>
        <taxon>Vertebrata</taxon>
        <taxon>Euteleostomi</taxon>
        <taxon>Mammalia</taxon>
        <taxon>Eutheria</taxon>
        <taxon>Euarchontoglires</taxon>
        <taxon>Glires</taxon>
        <taxon>Rodentia</taxon>
        <taxon>Myomorpha</taxon>
        <taxon>Muroidea</taxon>
        <taxon>Muridae</taxon>
        <taxon>Murinae</taxon>
        <taxon>Mus</taxon>
        <taxon>Mus</taxon>
    </lineage>
</organism>
<evidence type="ECO:0000250" key="1">
    <source>
        <dbReference type="UniProtKB" id="A2RU14"/>
    </source>
</evidence>
<evidence type="ECO:0000255" key="2"/>
<evidence type="ECO:0000269" key="3">
    <source>
    </source>
</evidence>
<evidence type="ECO:0000269" key="4">
    <source>
    </source>
</evidence>
<evidence type="ECO:0000305" key="5"/>
<evidence type="ECO:0000305" key="6">
    <source>
    </source>
</evidence>
<accession>Q9CQ44</accession>
<accession>Q8CF13</accession>
<comment type="function">
    <text evidence="6">May be involved in ciliary biogenesis or function.</text>
</comment>
<comment type="subunit">
    <text evidence="1">Interacts with TMEM67.</text>
</comment>
<comment type="subcellular location">
    <subcellularLocation>
        <location evidence="5">Membrane</location>
        <topology evidence="5">Multi-pass membrane protein</topology>
    </subcellularLocation>
    <subcellularLocation>
        <location evidence="4">Cell projection</location>
        <location evidence="4">Cilium</location>
    </subcellularLocation>
    <text evidence="4">Localizes at the transition zone, a region between the basal body and the ciliary axoneme.</text>
</comment>
<comment type="disruption phenotype">
    <text evidence="3">Diffuse renal cyst development with tubulointerstitial nephropathy and disruption of tubular basement membranes in essentially normal-sized kidneys. Retinal lesions characterized by slow-onset loss of photoreceptors.</text>
</comment>
<comment type="similarity">
    <text evidence="5">Belongs to the TMEM218 family.</text>
</comment>
<protein>
    <recommendedName>
        <fullName>Transmembrane protein 218</fullName>
    </recommendedName>
</protein>
<name>TM218_MOUSE</name>